<name>CYB_SORPE</name>
<accession>Q8SE72</accession>
<evidence type="ECO:0000250" key="1"/>
<evidence type="ECO:0000250" key="2">
    <source>
        <dbReference type="UniProtKB" id="P00157"/>
    </source>
</evidence>
<evidence type="ECO:0000255" key="3">
    <source>
        <dbReference type="PROSITE-ProRule" id="PRU00967"/>
    </source>
</evidence>
<evidence type="ECO:0000255" key="4">
    <source>
        <dbReference type="PROSITE-ProRule" id="PRU00968"/>
    </source>
</evidence>
<gene>
    <name type="primary">MT-CYB</name>
    <name type="synonym">COB</name>
    <name type="synonym">CYTB</name>
    <name type="synonym">MTCYB</name>
</gene>
<feature type="chain" id="PRO_0000061575" description="Cytochrome b">
    <location>
        <begin position="1"/>
        <end position="379"/>
    </location>
</feature>
<feature type="transmembrane region" description="Helical" evidence="2">
    <location>
        <begin position="33"/>
        <end position="53"/>
    </location>
</feature>
<feature type="transmembrane region" description="Helical" evidence="2">
    <location>
        <begin position="77"/>
        <end position="98"/>
    </location>
</feature>
<feature type="transmembrane region" description="Helical" evidence="2">
    <location>
        <begin position="113"/>
        <end position="133"/>
    </location>
</feature>
<feature type="transmembrane region" description="Helical" evidence="2">
    <location>
        <begin position="178"/>
        <end position="198"/>
    </location>
</feature>
<feature type="transmembrane region" description="Helical" evidence="2">
    <location>
        <begin position="226"/>
        <end position="246"/>
    </location>
</feature>
<feature type="transmembrane region" description="Helical" evidence="2">
    <location>
        <begin position="288"/>
        <end position="308"/>
    </location>
</feature>
<feature type="transmembrane region" description="Helical" evidence="2">
    <location>
        <begin position="320"/>
        <end position="340"/>
    </location>
</feature>
<feature type="transmembrane region" description="Helical" evidence="2">
    <location>
        <begin position="347"/>
        <end position="367"/>
    </location>
</feature>
<feature type="binding site" description="axial binding residue" evidence="2">
    <location>
        <position position="83"/>
    </location>
    <ligand>
        <name>heme b</name>
        <dbReference type="ChEBI" id="CHEBI:60344"/>
        <label>b562</label>
    </ligand>
    <ligandPart>
        <name>Fe</name>
        <dbReference type="ChEBI" id="CHEBI:18248"/>
    </ligandPart>
</feature>
<feature type="binding site" description="axial binding residue" evidence="2">
    <location>
        <position position="97"/>
    </location>
    <ligand>
        <name>heme b</name>
        <dbReference type="ChEBI" id="CHEBI:60344"/>
        <label>b566</label>
    </ligand>
    <ligandPart>
        <name>Fe</name>
        <dbReference type="ChEBI" id="CHEBI:18248"/>
    </ligandPart>
</feature>
<feature type="binding site" description="axial binding residue" evidence="2">
    <location>
        <position position="182"/>
    </location>
    <ligand>
        <name>heme b</name>
        <dbReference type="ChEBI" id="CHEBI:60344"/>
        <label>b562</label>
    </ligand>
    <ligandPart>
        <name>Fe</name>
        <dbReference type="ChEBI" id="CHEBI:18248"/>
    </ligandPart>
</feature>
<feature type="binding site" description="axial binding residue" evidence="2">
    <location>
        <position position="196"/>
    </location>
    <ligand>
        <name>heme b</name>
        <dbReference type="ChEBI" id="CHEBI:60344"/>
        <label>b566</label>
    </ligand>
    <ligandPart>
        <name>Fe</name>
        <dbReference type="ChEBI" id="CHEBI:18248"/>
    </ligandPart>
</feature>
<feature type="binding site" evidence="2">
    <location>
        <position position="201"/>
    </location>
    <ligand>
        <name>a ubiquinone</name>
        <dbReference type="ChEBI" id="CHEBI:16389"/>
    </ligand>
</feature>
<organism>
    <name type="scientific">Sorex preblei</name>
    <name type="common">Preble's shrew</name>
    <dbReference type="NCBI Taxonomy" id="144775"/>
    <lineage>
        <taxon>Eukaryota</taxon>
        <taxon>Metazoa</taxon>
        <taxon>Chordata</taxon>
        <taxon>Craniata</taxon>
        <taxon>Vertebrata</taxon>
        <taxon>Euteleostomi</taxon>
        <taxon>Mammalia</taxon>
        <taxon>Eutheria</taxon>
        <taxon>Laurasiatheria</taxon>
        <taxon>Eulipotyphla</taxon>
        <taxon>Soricidae</taxon>
        <taxon>Soricinae</taxon>
        <taxon>Sorex</taxon>
    </lineage>
</organism>
<keyword id="KW-0249">Electron transport</keyword>
<keyword id="KW-0349">Heme</keyword>
<keyword id="KW-0408">Iron</keyword>
<keyword id="KW-0472">Membrane</keyword>
<keyword id="KW-0479">Metal-binding</keyword>
<keyword id="KW-0496">Mitochondrion</keyword>
<keyword id="KW-0999">Mitochondrion inner membrane</keyword>
<keyword id="KW-0679">Respiratory chain</keyword>
<keyword id="KW-0812">Transmembrane</keyword>
<keyword id="KW-1133">Transmembrane helix</keyword>
<keyword id="KW-0813">Transport</keyword>
<keyword id="KW-0830">Ubiquinone</keyword>
<reference key="1">
    <citation type="journal article" date="2003" name="J. Mammal.">
        <title>Phylogenetic diversification within the Sorex cinereus group (Soricidae).</title>
        <authorList>
            <person name="Demboski J.R."/>
            <person name="Cook J.A."/>
        </authorList>
    </citation>
    <scope>NUCLEOTIDE SEQUENCE [GENOMIC DNA]</scope>
    <source>
        <strain>Isolate NK 652</strain>
        <strain>Isolate NK 656</strain>
    </source>
</reference>
<comment type="function">
    <text evidence="2">Component of the ubiquinol-cytochrome c reductase complex (complex III or cytochrome b-c1 complex) that is part of the mitochondrial respiratory chain. The b-c1 complex mediates electron transfer from ubiquinol to cytochrome c. Contributes to the generation of a proton gradient across the mitochondrial membrane that is then used for ATP synthesis.</text>
</comment>
<comment type="cofactor">
    <cofactor evidence="2">
        <name>heme b</name>
        <dbReference type="ChEBI" id="CHEBI:60344"/>
    </cofactor>
    <text evidence="2">Binds 2 heme b groups non-covalently.</text>
</comment>
<comment type="subunit">
    <text evidence="2">The cytochrome bc1 complex contains 11 subunits: 3 respiratory subunits (MT-CYB, CYC1 and UQCRFS1), 2 core proteins (UQCRC1 and UQCRC2) and 6 low-molecular weight proteins (UQCRH/QCR6, UQCRB/QCR7, UQCRQ/QCR8, UQCR10/QCR9, UQCR11/QCR10 and a cleavage product of UQCRFS1). This cytochrome bc1 complex then forms a dimer.</text>
</comment>
<comment type="subcellular location">
    <subcellularLocation>
        <location evidence="2">Mitochondrion inner membrane</location>
        <topology evidence="2">Multi-pass membrane protein</topology>
    </subcellularLocation>
</comment>
<comment type="miscellaneous">
    <text evidence="1">Heme 1 (or BL or b562) is low-potential and absorbs at about 562 nm, and heme 2 (or BH or b566) is high-potential and absorbs at about 566 nm.</text>
</comment>
<comment type="similarity">
    <text evidence="3 4">Belongs to the cytochrome b family.</text>
</comment>
<comment type="caution">
    <text evidence="2">The full-length protein contains only eight transmembrane helices, not nine as predicted by bioinformatics tools.</text>
</comment>
<dbReference type="EMBL" id="AY014936">
    <property type="protein sequence ID" value="AAG40495.1"/>
    <property type="molecule type" value="Genomic_DNA"/>
</dbReference>
<dbReference type="EMBL" id="AY014937">
    <property type="protein sequence ID" value="AAG40496.1"/>
    <property type="molecule type" value="Genomic_DNA"/>
</dbReference>
<dbReference type="SMR" id="Q8SE72"/>
<dbReference type="GO" id="GO:0005743">
    <property type="term" value="C:mitochondrial inner membrane"/>
    <property type="evidence" value="ECO:0007669"/>
    <property type="project" value="UniProtKB-SubCell"/>
</dbReference>
<dbReference type="GO" id="GO:0045275">
    <property type="term" value="C:respiratory chain complex III"/>
    <property type="evidence" value="ECO:0007669"/>
    <property type="project" value="InterPro"/>
</dbReference>
<dbReference type="GO" id="GO:0046872">
    <property type="term" value="F:metal ion binding"/>
    <property type="evidence" value="ECO:0007669"/>
    <property type="project" value="UniProtKB-KW"/>
</dbReference>
<dbReference type="GO" id="GO:0008121">
    <property type="term" value="F:ubiquinol-cytochrome-c reductase activity"/>
    <property type="evidence" value="ECO:0007669"/>
    <property type="project" value="InterPro"/>
</dbReference>
<dbReference type="GO" id="GO:0006122">
    <property type="term" value="P:mitochondrial electron transport, ubiquinol to cytochrome c"/>
    <property type="evidence" value="ECO:0007669"/>
    <property type="project" value="TreeGrafter"/>
</dbReference>
<dbReference type="CDD" id="cd00290">
    <property type="entry name" value="cytochrome_b_C"/>
    <property type="match status" value="1"/>
</dbReference>
<dbReference type="CDD" id="cd00284">
    <property type="entry name" value="Cytochrome_b_N"/>
    <property type="match status" value="1"/>
</dbReference>
<dbReference type="FunFam" id="1.20.810.10:FF:000002">
    <property type="entry name" value="Cytochrome b"/>
    <property type="match status" value="1"/>
</dbReference>
<dbReference type="Gene3D" id="1.20.810.10">
    <property type="entry name" value="Cytochrome Bc1 Complex, Chain C"/>
    <property type="match status" value="1"/>
</dbReference>
<dbReference type="InterPro" id="IPR005798">
    <property type="entry name" value="Cyt_b/b6_C"/>
</dbReference>
<dbReference type="InterPro" id="IPR036150">
    <property type="entry name" value="Cyt_b/b6_C_sf"/>
</dbReference>
<dbReference type="InterPro" id="IPR005797">
    <property type="entry name" value="Cyt_b/b6_N"/>
</dbReference>
<dbReference type="InterPro" id="IPR027387">
    <property type="entry name" value="Cytb/b6-like_sf"/>
</dbReference>
<dbReference type="InterPro" id="IPR030689">
    <property type="entry name" value="Cytochrome_b"/>
</dbReference>
<dbReference type="InterPro" id="IPR048260">
    <property type="entry name" value="Cytochrome_b_C_euk/bac"/>
</dbReference>
<dbReference type="InterPro" id="IPR048259">
    <property type="entry name" value="Cytochrome_b_N_euk/bac"/>
</dbReference>
<dbReference type="InterPro" id="IPR016174">
    <property type="entry name" value="Di-haem_cyt_TM"/>
</dbReference>
<dbReference type="PANTHER" id="PTHR19271">
    <property type="entry name" value="CYTOCHROME B"/>
    <property type="match status" value="1"/>
</dbReference>
<dbReference type="PANTHER" id="PTHR19271:SF16">
    <property type="entry name" value="CYTOCHROME B"/>
    <property type="match status" value="1"/>
</dbReference>
<dbReference type="Pfam" id="PF00032">
    <property type="entry name" value="Cytochrom_B_C"/>
    <property type="match status" value="1"/>
</dbReference>
<dbReference type="Pfam" id="PF00033">
    <property type="entry name" value="Cytochrome_B"/>
    <property type="match status" value="1"/>
</dbReference>
<dbReference type="PIRSF" id="PIRSF038885">
    <property type="entry name" value="COB"/>
    <property type="match status" value="1"/>
</dbReference>
<dbReference type="SUPFAM" id="SSF81648">
    <property type="entry name" value="a domain/subunit of cytochrome bc1 complex (Ubiquinol-cytochrome c reductase)"/>
    <property type="match status" value="1"/>
</dbReference>
<dbReference type="SUPFAM" id="SSF81342">
    <property type="entry name" value="Transmembrane di-heme cytochromes"/>
    <property type="match status" value="1"/>
</dbReference>
<dbReference type="PROSITE" id="PS51003">
    <property type="entry name" value="CYTB_CTER"/>
    <property type="match status" value="1"/>
</dbReference>
<dbReference type="PROSITE" id="PS51002">
    <property type="entry name" value="CYTB_NTER"/>
    <property type="match status" value="1"/>
</dbReference>
<geneLocation type="mitochondrion"/>
<sequence length="379" mass="42614">MTNLRKTHPLMKIINSSFIDLPAPSNISSWWNFGSLLGVCLIVQILTGLFLAMHYTSDTMTAFSSVTHICRDVNYGWLIRYLHANGASMFFICLFLHVGRGLYYGSYMFLETWNIGVLLLFAVMATAFMGYVLPWGQMSFWGATVITNLLSAIPYIGSDLVEWIWGGFSVDKATLTRFFAFHFILPFIIAALAGVHLLFLHETGSNNPSGLCSDADKIPFHPYYTIKDILGVLLLILVLTSLVLFSPDLLGDPDNYTPANPLNTPPHIKPEWYFLFAYAILRSIPNKLGGVLALVLSILVLAVIPFLHTSKQRSMMFRPFSQCLFWILVADLLTLTWIGGQPVEHPFIIIGQLASILYFLLILVLMPITSLLENHLLKW</sequence>
<proteinExistence type="inferred from homology"/>
<protein>
    <recommendedName>
        <fullName>Cytochrome b</fullName>
    </recommendedName>
    <alternativeName>
        <fullName>Complex III subunit 3</fullName>
    </alternativeName>
    <alternativeName>
        <fullName>Complex III subunit III</fullName>
    </alternativeName>
    <alternativeName>
        <fullName>Cytochrome b-c1 complex subunit 3</fullName>
    </alternativeName>
    <alternativeName>
        <fullName>Ubiquinol-cytochrome-c reductase complex cytochrome b subunit</fullName>
    </alternativeName>
</protein>